<evidence type="ECO:0000255" key="1">
    <source>
        <dbReference type="HAMAP-Rule" id="MF_01227"/>
    </source>
</evidence>
<dbReference type="EC" id="6.3.4.2" evidence="1"/>
<dbReference type="EMBL" id="CP000051">
    <property type="protein sequence ID" value="AAX50443.1"/>
    <property type="molecule type" value="Genomic_DNA"/>
</dbReference>
<dbReference type="RefSeq" id="WP_011324624.1">
    <property type="nucleotide sequence ID" value="NC_007429.1"/>
</dbReference>
<dbReference type="SMR" id="Q3KMH9"/>
<dbReference type="MEROPS" id="C26.964"/>
<dbReference type="KEGG" id="cta:CTA_0201"/>
<dbReference type="HOGENOM" id="CLU_011675_5_0_0"/>
<dbReference type="UniPathway" id="UPA00159">
    <property type="reaction ID" value="UER00277"/>
</dbReference>
<dbReference type="Proteomes" id="UP000002532">
    <property type="component" value="Chromosome"/>
</dbReference>
<dbReference type="GO" id="GO:0005829">
    <property type="term" value="C:cytosol"/>
    <property type="evidence" value="ECO:0007669"/>
    <property type="project" value="TreeGrafter"/>
</dbReference>
<dbReference type="GO" id="GO:0005524">
    <property type="term" value="F:ATP binding"/>
    <property type="evidence" value="ECO:0007669"/>
    <property type="project" value="UniProtKB-KW"/>
</dbReference>
<dbReference type="GO" id="GO:0003883">
    <property type="term" value="F:CTP synthase activity"/>
    <property type="evidence" value="ECO:0007669"/>
    <property type="project" value="UniProtKB-UniRule"/>
</dbReference>
<dbReference type="GO" id="GO:0004359">
    <property type="term" value="F:glutaminase activity"/>
    <property type="evidence" value="ECO:0007669"/>
    <property type="project" value="RHEA"/>
</dbReference>
<dbReference type="GO" id="GO:0042802">
    <property type="term" value="F:identical protein binding"/>
    <property type="evidence" value="ECO:0007669"/>
    <property type="project" value="TreeGrafter"/>
</dbReference>
<dbReference type="GO" id="GO:0046872">
    <property type="term" value="F:metal ion binding"/>
    <property type="evidence" value="ECO:0007669"/>
    <property type="project" value="UniProtKB-KW"/>
</dbReference>
<dbReference type="GO" id="GO:0044210">
    <property type="term" value="P:'de novo' CTP biosynthetic process"/>
    <property type="evidence" value="ECO:0007669"/>
    <property type="project" value="UniProtKB-UniRule"/>
</dbReference>
<dbReference type="GO" id="GO:0019856">
    <property type="term" value="P:pyrimidine nucleobase biosynthetic process"/>
    <property type="evidence" value="ECO:0007669"/>
    <property type="project" value="TreeGrafter"/>
</dbReference>
<dbReference type="CDD" id="cd03113">
    <property type="entry name" value="CTPS_N"/>
    <property type="match status" value="1"/>
</dbReference>
<dbReference type="CDD" id="cd01746">
    <property type="entry name" value="GATase1_CTP_Synthase"/>
    <property type="match status" value="1"/>
</dbReference>
<dbReference type="FunFam" id="3.40.50.300:FF:000009">
    <property type="entry name" value="CTP synthase"/>
    <property type="match status" value="1"/>
</dbReference>
<dbReference type="FunFam" id="3.40.50.880:FF:000002">
    <property type="entry name" value="CTP synthase"/>
    <property type="match status" value="1"/>
</dbReference>
<dbReference type="Gene3D" id="3.40.50.880">
    <property type="match status" value="1"/>
</dbReference>
<dbReference type="Gene3D" id="3.40.50.300">
    <property type="entry name" value="P-loop containing nucleotide triphosphate hydrolases"/>
    <property type="match status" value="1"/>
</dbReference>
<dbReference type="HAMAP" id="MF_01227">
    <property type="entry name" value="PyrG"/>
    <property type="match status" value="1"/>
</dbReference>
<dbReference type="InterPro" id="IPR029062">
    <property type="entry name" value="Class_I_gatase-like"/>
</dbReference>
<dbReference type="InterPro" id="IPR004468">
    <property type="entry name" value="CTP_synthase"/>
</dbReference>
<dbReference type="InterPro" id="IPR017456">
    <property type="entry name" value="CTP_synthase_N"/>
</dbReference>
<dbReference type="InterPro" id="IPR017926">
    <property type="entry name" value="GATASE"/>
</dbReference>
<dbReference type="InterPro" id="IPR033828">
    <property type="entry name" value="GATase1_CTP_Synthase"/>
</dbReference>
<dbReference type="InterPro" id="IPR027417">
    <property type="entry name" value="P-loop_NTPase"/>
</dbReference>
<dbReference type="NCBIfam" id="NF003792">
    <property type="entry name" value="PRK05380.1"/>
    <property type="match status" value="1"/>
</dbReference>
<dbReference type="NCBIfam" id="TIGR00337">
    <property type="entry name" value="PyrG"/>
    <property type="match status" value="1"/>
</dbReference>
<dbReference type="PANTHER" id="PTHR11550">
    <property type="entry name" value="CTP SYNTHASE"/>
    <property type="match status" value="1"/>
</dbReference>
<dbReference type="PANTHER" id="PTHR11550:SF0">
    <property type="entry name" value="CTP SYNTHASE-RELATED"/>
    <property type="match status" value="1"/>
</dbReference>
<dbReference type="Pfam" id="PF06418">
    <property type="entry name" value="CTP_synth_N"/>
    <property type="match status" value="1"/>
</dbReference>
<dbReference type="Pfam" id="PF00117">
    <property type="entry name" value="GATase"/>
    <property type="match status" value="1"/>
</dbReference>
<dbReference type="SUPFAM" id="SSF52317">
    <property type="entry name" value="Class I glutamine amidotransferase-like"/>
    <property type="match status" value="1"/>
</dbReference>
<dbReference type="SUPFAM" id="SSF52540">
    <property type="entry name" value="P-loop containing nucleoside triphosphate hydrolases"/>
    <property type="match status" value="1"/>
</dbReference>
<dbReference type="PROSITE" id="PS51273">
    <property type="entry name" value="GATASE_TYPE_1"/>
    <property type="match status" value="1"/>
</dbReference>
<protein>
    <recommendedName>
        <fullName evidence="1">CTP synthase</fullName>
        <ecNumber evidence="1">6.3.4.2</ecNumber>
    </recommendedName>
    <alternativeName>
        <fullName evidence="1">Cytidine 5'-triphosphate synthase</fullName>
    </alternativeName>
    <alternativeName>
        <fullName evidence="1">Cytidine triphosphate synthetase</fullName>
        <shortName evidence="1">CTP synthetase</shortName>
        <shortName evidence="1">CTPS</shortName>
    </alternativeName>
    <alternativeName>
        <fullName evidence="1">UTP--ammonia ligase</fullName>
    </alternativeName>
</protein>
<sequence length="539" mass="60204">MSFKSIFLTGGVVSSLGKGLTAASLALLLERQDLKVAMLKLDPYLNVDPGTMNPYEHGEVYVTDDGVETDLDLGHYHRFSSVQLSKYSTATSGQIYTKVLTKERNGEFLGSTVQVIPHVTNEIINVIQSCADHHKPDILIVEIGGTIGDIESLPFLEAVRQFRCEHPQDCLSIHMTYVPYLRAAKEIKTKPTQHSVQNLRSIGISPDVILCRSEAPLSTEVKRKISLFCNVPEHAVFNAIDLERSIYEMPLLLAKENISDFLLNKLGFSPKPLDLSDWQDLVEALCDKERQHVRIGLVGKYLEHEDAYKSVFESLFHASVPANCSLELVPIAPESEDLLEQLSQCDGCLIPGGFGTRSWEGKISAARYCRERNIPCFGICLGMQALVVEYARNVLDKPLANSMEINPETPDPVVCMMEGQDSVVKGGTMRLGAYPCRIAPGSLASAAYKTDLVQERHRHRYEVNPSYIERLEEHGLKIAGVCPLGELCEIVEIPNHRWMLGVQFHPEFLSKLAKPHPLFIEFIRAAKAYSLEKANHEHR</sequence>
<organism>
    <name type="scientific">Chlamydia trachomatis serovar A (strain ATCC VR-571B / DSM 19440 / HAR-13)</name>
    <dbReference type="NCBI Taxonomy" id="315277"/>
    <lineage>
        <taxon>Bacteria</taxon>
        <taxon>Pseudomonadati</taxon>
        <taxon>Chlamydiota</taxon>
        <taxon>Chlamydiia</taxon>
        <taxon>Chlamydiales</taxon>
        <taxon>Chlamydiaceae</taxon>
        <taxon>Chlamydia/Chlamydophila group</taxon>
        <taxon>Chlamydia</taxon>
    </lineage>
</organism>
<reference key="1">
    <citation type="journal article" date="2005" name="Infect. Immun.">
        <title>Comparative genomic analysis of Chlamydia trachomatis oculotropic and genitotropic strains.</title>
        <authorList>
            <person name="Carlson J.H."/>
            <person name="Porcella S.F."/>
            <person name="McClarty G."/>
            <person name="Caldwell H.D."/>
        </authorList>
    </citation>
    <scope>NUCLEOTIDE SEQUENCE [LARGE SCALE GENOMIC DNA]</scope>
    <source>
        <strain>ATCC VR-571B / DSM 19440 / HAR-13</strain>
    </source>
</reference>
<comment type="function">
    <text evidence="1">Catalyzes the ATP-dependent amination of UTP to CTP with either L-glutamine or ammonia as the source of nitrogen. Regulates intracellular CTP levels through interactions with the four ribonucleotide triphosphates.</text>
</comment>
<comment type="catalytic activity">
    <reaction evidence="1">
        <text>UTP + L-glutamine + ATP + H2O = CTP + L-glutamate + ADP + phosphate + 2 H(+)</text>
        <dbReference type="Rhea" id="RHEA:26426"/>
        <dbReference type="ChEBI" id="CHEBI:15377"/>
        <dbReference type="ChEBI" id="CHEBI:15378"/>
        <dbReference type="ChEBI" id="CHEBI:29985"/>
        <dbReference type="ChEBI" id="CHEBI:30616"/>
        <dbReference type="ChEBI" id="CHEBI:37563"/>
        <dbReference type="ChEBI" id="CHEBI:43474"/>
        <dbReference type="ChEBI" id="CHEBI:46398"/>
        <dbReference type="ChEBI" id="CHEBI:58359"/>
        <dbReference type="ChEBI" id="CHEBI:456216"/>
        <dbReference type="EC" id="6.3.4.2"/>
    </reaction>
</comment>
<comment type="catalytic activity">
    <reaction evidence="1">
        <text>L-glutamine + H2O = L-glutamate + NH4(+)</text>
        <dbReference type="Rhea" id="RHEA:15889"/>
        <dbReference type="ChEBI" id="CHEBI:15377"/>
        <dbReference type="ChEBI" id="CHEBI:28938"/>
        <dbReference type="ChEBI" id="CHEBI:29985"/>
        <dbReference type="ChEBI" id="CHEBI:58359"/>
    </reaction>
</comment>
<comment type="catalytic activity">
    <reaction evidence="1">
        <text>UTP + NH4(+) + ATP = CTP + ADP + phosphate + 2 H(+)</text>
        <dbReference type="Rhea" id="RHEA:16597"/>
        <dbReference type="ChEBI" id="CHEBI:15378"/>
        <dbReference type="ChEBI" id="CHEBI:28938"/>
        <dbReference type="ChEBI" id="CHEBI:30616"/>
        <dbReference type="ChEBI" id="CHEBI:37563"/>
        <dbReference type="ChEBI" id="CHEBI:43474"/>
        <dbReference type="ChEBI" id="CHEBI:46398"/>
        <dbReference type="ChEBI" id="CHEBI:456216"/>
    </reaction>
</comment>
<comment type="activity regulation">
    <text evidence="1">Allosterically activated by GTP, when glutamine is the substrate; GTP has no effect on the reaction when ammonia is the substrate. The allosteric effector GTP functions by stabilizing the protein conformation that binds the tetrahedral intermediate(s) formed during glutamine hydrolysis. Inhibited by the product CTP, via allosteric rather than competitive inhibition.</text>
</comment>
<comment type="pathway">
    <text evidence="1">Pyrimidine metabolism; CTP biosynthesis via de novo pathway; CTP from UDP: step 2/2.</text>
</comment>
<comment type="subunit">
    <text evidence="1">Homotetramer.</text>
</comment>
<comment type="miscellaneous">
    <text evidence="1">CTPSs have evolved a hybrid strategy for distinguishing between UTP and CTP. The overlapping regions of the product feedback inhibitory and substrate sites recognize a common feature in both compounds, the triphosphate moiety. To differentiate isosteric substrate and product pyrimidine rings, an additional pocket far from the expected kinase/ligase catalytic site, specifically recognizes the cytosine and ribose portions of the product inhibitor.</text>
</comment>
<comment type="similarity">
    <text evidence="1">Belongs to the CTP synthase family.</text>
</comment>
<accession>Q3KMH9</accession>
<keyword id="KW-0067">ATP-binding</keyword>
<keyword id="KW-0315">Glutamine amidotransferase</keyword>
<keyword id="KW-0436">Ligase</keyword>
<keyword id="KW-0460">Magnesium</keyword>
<keyword id="KW-0479">Metal-binding</keyword>
<keyword id="KW-0547">Nucleotide-binding</keyword>
<keyword id="KW-0665">Pyrimidine biosynthesis</keyword>
<feature type="chain" id="PRO_0000266090" description="CTP synthase">
    <location>
        <begin position="1"/>
        <end position="539"/>
    </location>
</feature>
<feature type="domain" description="Glutamine amidotransferase type-1" evidence="1">
    <location>
        <begin position="294"/>
        <end position="532"/>
    </location>
</feature>
<feature type="region of interest" description="Amidoligase domain" evidence="1">
    <location>
        <begin position="1"/>
        <end position="268"/>
    </location>
</feature>
<feature type="active site" description="Nucleophile; for glutamine hydrolysis" evidence="1">
    <location>
        <position position="380"/>
    </location>
</feature>
<feature type="active site" evidence="1">
    <location>
        <position position="505"/>
    </location>
</feature>
<feature type="active site" evidence="1">
    <location>
        <position position="507"/>
    </location>
</feature>
<feature type="binding site" evidence="1">
    <location>
        <position position="14"/>
    </location>
    <ligand>
        <name>CTP</name>
        <dbReference type="ChEBI" id="CHEBI:37563"/>
        <note>allosteric inhibitor</note>
    </ligand>
</feature>
<feature type="binding site" evidence="1">
    <location>
        <position position="14"/>
    </location>
    <ligand>
        <name>UTP</name>
        <dbReference type="ChEBI" id="CHEBI:46398"/>
    </ligand>
</feature>
<feature type="binding site" evidence="1">
    <location>
        <begin position="15"/>
        <end position="20"/>
    </location>
    <ligand>
        <name>ATP</name>
        <dbReference type="ChEBI" id="CHEBI:30616"/>
    </ligand>
</feature>
<feature type="binding site" evidence="1">
    <location>
        <position position="55"/>
    </location>
    <ligand>
        <name>L-glutamine</name>
        <dbReference type="ChEBI" id="CHEBI:58359"/>
    </ligand>
</feature>
<feature type="binding site" evidence="1">
    <location>
        <position position="72"/>
    </location>
    <ligand>
        <name>ATP</name>
        <dbReference type="ChEBI" id="CHEBI:30616"/>
    </ligand>
</feature>
<feature type="binding site" evidence="1">
    <location>
        <position position="72"/>
    </location>
    <ligand>
        <name>Mg(2+)</name>
        <dbReference type="ChEBI" id="CHEBI:18420"/>
    </ligand>
</feature>
<feature type="binding site" evidence="1">
    <location>
        <position position="142"/>
    </location>
    <ligand>
        <name>Mg(2+)</name>
        <dbReference type="ChEBI" id="CHEBI:18420"/>
    </ligand>
</feature>
<feature type="binding site" evidence="1">
    <location>
        <begin position="149"/>
        <end position="151"/>
    </location>
    <ligand>
        <name>CTP</name>
        <dbReference type="ChEBI" id="CHEBI:37563"/>
        <note>allosteric inhibitor</note>
    </ligand>
</feature>
<feature type="binding site" evidence="1">
    <location>
        <begin position="188"/>
        <end position="193"/>
    </location>
    <ligand>
        <name>CTP</name>
        <dbReference type="ChEBI" id="CHEBI:37563"/>
        <note>allosteric inhibitor</note>
    </ligand>
</feature>
<feature type="binding site" evidence="1">
    <location>
        <begin position="188"/>
        <end position="193"/>
    </location>
    <ligand>
        <name>UTP</name>
        <dbReference type="ChEBI" id="CHEBI:46398"/>
    </ligand>
</feature>
<feature type="binding site" evidence="1">
    <location>
        <position position="224"/>
    </location>
    <ligand>
        <name>CTP</name>
        <dbReference type="ChEBI" id="CHEBI:37563"/>
        <note>allosteric inhibitor</note>
    </ligand>
</feature>
<feature type="binding site" evidence="1">
    <location>
        <position position="224"/>
    </location>
    <ligand>
        <name>UTP</name>
        <dbReference type="ChEBI" id="CHEBI:46398"/>
    </ligand>
</feature>
<feature type="binding site" evidence="1">
    <location>
        <position position="353"/>
    </location>
    <ligand>
        <name>L-glutamine</name>
        <dbReference type="ChEBI" id="CHEBI:58359"/>
    </ligand>
</feature>
<feature type="binding site" evidence="1">
    <location>
        <begin position="381"/>
        <end position="384"/>
    </location>
    <ligand>
        <name>L-glutamine</name>
        <dbReference type="ChEBI" id="CHEBI:58359"/>
    </ligand>
</feature>
<feature type="binding site" evidence="1">
    <location>
        <position position="404"/>
    </location>
    <ligand>
        <name>L-glutamine</name>
        <dbReference type="ChEBI" id="CHEBI:58359"/>
    </ligand>
</feature>
<feature type="binding site" evidence="1">
    <location>
        <position position="460"/>
    </location>
    <ligand>
        <name>L-glutamine</name>
        <dbReference type="ChEBI" id="CHEBI:58359"/>
    </ligand>
</feature>
<proteinExistence type="inferred from homology"/>
<gene>
    <name evidence="1" type="primary">pyrG</name>
    <name type="ordered locus">CTA_0201</name>
</gene>
<name>PYRG_CHLTA</name>